<evidence type="ECO:0000255" key="1">
    <source>
        <dbReference type="HAMAP-Rule" id="MF_01147"/>
    </source>
</evidence>
<reference key="1">
    <citation type="submission" date="2006-03" db="EMBL/GenBank/DDBJ databases">
        <title>Complete genome sequence of Francisella tularensis LVS (Live Vaccine Strain).</title>
        <authorList>
            <person name="Chain P."/>
            <person name="Larimer F."/>
            <person name="Land M."/>
            <person name="Stilwagen S."/>
            <person name="Larsson P."/>
            <person name="Bearden S."/>
            <person name="Chu M."/>
            <person name="Oyston P."/>
            <person name="Forsman M."/>
            <person name="Andersson S."/>
            <person name="Lindler L."/>
            <person name="Titball R."/>
            <person name="Garcia E."/>
        </authorList>
    </citation>
    <scope>NUCLEOTIDE SEQUENCE [LARGE SCALE GENOMIC DNA]</scope>
    <source>
        <strain>LVS</strain>
    </source>
</reference>
<name>LGT_FRATH</name>
<sequence>MLQYPHINPVALQLGPIKIHWYGLMYLLGIFAGWYLTRYRAKVKPWAPIKPEQVGDLTFYVALGVILGGRIGYIIFYNLPYYFHNPSQMFFLWDGGMSFHGGFIGVLIAFALFARKIGANFFDLGEFVAPVIPIGLGAGRIGNFINGELLGKVTDSPLGMVFPTGGPLPRYPSQLFEFFFEGVVLFSVLWLVTIKKRPRYLVLGLFMFLYGYARFICEFFRQPDPQYGYIFFNWMTMGQILSIPMILLGAVILIAVFIKTRKNKCENI</sequence>
<accession>Q2A485</accession>
<keyword id="KW-0997">Cell inner membrane</keyword>
<keyword id="KW-1003">Cell membrane</keyword>
<keyword id="KW-0472">Membrane</keyword>
<keyword id="KW-1185">Reference proteome</keyword>
<keyword id="KW-0808">Transferase</keyword>
<keyword id="KW-0812">Transmembrane</keyword>
<keyword id="KW-1133">Transmembrane helix</keyword>
<dbReference type="EC" id="2.5.1.145" evidence="1"/>
<dbReference type="EMBL" id="AM233362">
    <property type="protein sequence ID" value="CAJ79155.1"/>
    <property type="molecule type" value="Genomic_DNA"/>
</dbReference>
<dbReference type="RefSeq" id="WP_010032772.1">
    <property type="nucleotide sequence ID" value="NZ_CP009694.1"/>
</dbReference>
<dbReference type="SMR" id="Q2A485"/>
<dbReference type="KEGG" id="ftl:FTL_0716"/>
<dbReference type="UniPathway" id="UPA00664"/>
<dbReference type="Proteomes" id="UP000001944">
    <property type="component" value="Chromosome"/>
</dbReference>
<dbReference type="GO" id="GO:0005886">
    <property type="term" value="C:plasma membrane"/>
    <property type="evidence" value="ECO:0007669"/>
    <property type="project" value="UniProtKB-SubCell"/>
</dbReference>
<dbReference type="GO" id="GO:0008961">
    <property type="term" value="F:phosphatidylglycerol-prolipoprotein diacylglyceryl transferase activity"/>
    <property type="evidence" value="ECO:0007669"/>
    <property type="project" value="UniProtKB-UniRule"/>
</dbReference>
<dbReference type="GO" id="GO:0042158">
    <property type="term" value="P:lipoprotein biosynthetic process"/>
    <property type="evidence" value="ECO:0007669"/>
    <property type="project" value="UniProtKB-UniRule"/>
</dbReference>
<dbReference type="HAMAP" id="MF_01147">
    <property type="entry name" value="Lgt"/>
    <property type="match status" value="1"/>
</dbReference>
<dbReference type="InterPro" id="IPR001640">
    <property type="entry name" value="Lgt"/>
</dbReference>
<dbReference type="NCBIfam" id="TIGR00544">
    <property type="entry name" value="lgt"/>
    <property type="match status" value="1"/>
</dbReference>
<dbReference type="PANTHER" id="PTHR30589:SF0">
    <property type="entry name" value="PHOSPHATIDYLGLYCEROL--PROLIPOPROTEIN DIACYLGLYCERYL TRANSFERASE"/>
    <property type="match status" value="1"/>
</dbReference>
<dbReference type="PANTHER" id="PTHR30589">
    <property type="entry name" value="PROLIPOPROTEIN DIACYLGLYCERYL TRANSFERASE"/>
    <property type="match status" value="1"/>
</dbReference>
<dbReference type="Pfam" id="PF01790">
    <property type="entry name" value="LGT"/>
    <property type="match status" value="1"/>
</dbReference>
<dbReference type="PROSITE" id="PS01311">
    <property type="entry name" value="LGT"/>
    <property type="match status" value="1"/>
</dbReference>
<comment type="function">
    <text evidence="1">Catalyzes the transfer of the diacylglyceryl group from phosphatidylglycerol to the sulfhydryl group of the N-terminal cysteine of a prolipoprotein, the first step in the formation of mature lipoproteins.</text>
</comment>
<comment type="catalytic activity">
    <reaction evidence="1">
        <text>L-cysteinyl-[prolipoprotein] + a 1,2-diacyl-sn-glycero-3-phospho-(1'-sn-glycerol) = an S-1,2-diacyl-sn-glyceryl-L-cysteinyl-[prolipoprotein] + sn-glycerol 1-phosphate + H(+)</text>
        <dbReference type="Rhea" id="RHEA:56712"/>
        <dbReference type="Rhea" id="RHEA-COMP:14679"/>
        <dbReference type="Rhea" id="RHEA-COMP:14680"/>
        <dbReference type="ChEBI" id="CHEBI:15378"/>
        <dbReference type="ChEBI" id="CHEBI:29950"/>
        <dbReference type="ChEBI" id="CHEBI:57685"/>
        <dbReference type="ChEBI" id="CHEBI:64716"/>
        <dbReference type="ChEBI" id="CHEBI:140658"/>
        <dbReference type="EC" id="2.5.1.145"/>
    </reaction>
</comment>
<comment type="pathway">
    <text evidence="1">Protein modification; lipoprotein biosynthesis (diacylglyceryl transfer).</text>
</comment>
<comment type="subcellular location">
    <subcellularLocation>
        <location evidence="1">Cell inner membrane</location>
        <topology evidence="1">Multi-pass membrane protein</topology>
    </subcellularLocation>
</comment>
<comment type="similarity">
    <text evidence="1">Belongs to the Lgt family.</text>
</comment>
<gene>
    <name evidence="1" type="primary">lgt</name>
    <name type="ordered locus">FTL_0716</name>
</gene>
<proteinExistence type="inferred from homology"/>
<feature type="chain" id="PRO_1000053433" description="Phosphatidylglycerol--prolipoprotein diacylglyceryl transferase">
    <location>
        <begin position="1"/>
        <end position="268"/>
    </location>
</feature>
<feature type="transmembrane region" description="Helical" evidence="1">
    <location>
        <begin position="14"/>
        <end position="34"/>
    </location>
</feature>
<feature type="transmembrane region" description="Helical" evidence="1">
    <location>
        <begin position="57"/>
        <end position="77"/>
    </location>
</feature>
<feature type="transmembrane region" description="Helical" evidence="1">
    <location>
        <begin position="90"/>
        <end position="110"/>
    </location>
</feature>
<feature type="transmembrane region" description="Helical" evidence="1">
    <location>
        <begin position="117"/>
        <end position="137"/>
    </location>
</feature>
<feature type="transmembrane region" description="Helical" evidence="1">
    <location>
        <begin position="174"/>
        <end position="194"/>
    </location>
</feature>
<feature type="transmembrane region" description="Helical" evidence="1">
    <location>
        <begin position="200"/>
        <end position="220"/>
    </location>
</feature>
<feature type="transmembrane region" description="Helical" evidence="1">
    <location>
        <begin position="238"/>
        <end position="258"/>
    </location>
</feature>
<feature type="binding site" evidence="1">
    <location>
        <position position="140"/>
    </location>
    <ligand>
        <name>a 1,2-diacyl-sn-glycero-3-phospho-(1'-sn-glycerol)</name>
        <dbReference type="ChEBI" id="CHEBI:64716"/>
    </ligand>
</feature>
<protein>
    <recommendedName>
        <fullName evidence="1">Phosphatidylglycerol--prolipoprotein diacylglyceryl transferase</fullName>
        <ecNumber evidence="1">2.5.1.145</ecNumber>
    </recommendedName>
</protein>
<organism>
    <name type="scientific">Francisella tularensis subsp. holarctica (strain LVS)</name>
    <dbReference type="NCBI Taxonomy" id="376619"/>
    <lineage>
        <taxon>Bacteria</taxon>
        <taxon>Pseudomonadati</taxon>
        <taxon>Pseudomonadota</taxon>
        <taxon>Gammaproteobacteria</taxon>
        <taxon>Thiotrichales</taxon>
        <taxon>Francisellaceae</taxon>
        <taxon>Francisella</taxon>
    </lineage>
</organism>